<keyword id="KW-1185">Reference proteome</keyword>
<keyword id="KW-0687">Ribonucleoprotein</keyword>
<keyword id="KW-0689">Ribosomal protein</keyword>
<keyword id="KW-0694">RNA-binding</keyword>
<keyword id="KW-0699">rRNA-binding</keyword>
<feature type="chain" id="PRO_0000154581" description="Large ribosomal subunit protein uL10">
    <location>
        <begin position="1"/>
        <end position="166"/>
    </location>
</feature>
<accession>Q81VU1</accession>
<accession>Q6I4U5</accession>
<accession>Q6KYJ0</accession>
<dbReference type="EMBL" id="AE016879">
    <property type="protein sequence ID" value="AAP24153.1"/>
    <property type="molecule type" value="Genomic_DNA"/>
</dbReference>
<dbReference type="EMBL" id="AE017334">
    <property type="protein sequence ID" value="AAT29178.1"/>
    <property type="molecule type" value="Genomic_DNA"/>
</dbReference>
<dbReference type="EMBL" id="AE017225">
    <property type="protein sequence ID" value="AAT52436.1"/>
    <property type="molecule type" value="Genomic_DNA"/>
</dbReference>
<dbReference type="RefSeq" id="NP_842667.1">
    <property type="nucleotide sequence ID" value="NC_003997.3"/>
</dbReference>
<dbReference type="RefSeq" id="WP_000048716.1">
    <property type="nucleotide sequence ID" value="NZ_WXXJ01000051.1"/>
</dbReference>
<dbReference type="RefSeq" id="YP_026385.1">
    <property type="nucleotide sequence ID" value="NC_005945.1"/>
</dbReference>
<dbReference type="SMR" id="Q81VU1"/>
<dbReference type="STRING" id="261594.GBAA_0099"/>
<dbReference type="DNASU" id="1086413"/>
<dbReference type="GeneID" id="93010954"/>
<dbReference type="KEGG" id="ban:BA_0099"/>
<dbReference type="KEGG" id="bar:GBAA_0099"/>
<dbReference type="KEGG" id="bat:BAS0099"/>
<dbReference type="PATRIC" id="fig|198094.11.peg.96"/>
<dbReference type="eggNOG" id="COG0244">
    <property type="taxonomic scope" value="Bacteria"/>
</dbReference>
<dbReference type="HOGENOM" id="CLU_092227_2_0_9"/>
<dbReference type="OMA" id="VRDQKQA"/>
<dbReference type="OrthoDB" id="9808307at2"/>
<dbReference type="Proteomes" id="UP000000427">
    <property type="component" value="Chromosome"/>
</dbReference>
<dbReference type="Proteomes" id="UP000000594">
    <property type="component" value="Chromosome"/>
</dbReference>
<dbReference type="GO" id="GO:0015934">
    <property type="term" value="C:large ribosomal subunit"/>
    <property type="evidence" value="ECO:0007669"/>
    <property type="project" value="InterPro"/>
</dbReference>
<dbReference type="GO" id="GO:0070180">
    <property type="term" value="F:large ribosomal subunit rRNA binding"/>
    <property type="evidence" value="ECO:0007669"/>
    <property type="project" value="UniProtKB-UniRule"/>
</dbReference>
<dbReference type="GO" id="GO:0003735">
    <property type="term" value="F:structural constituent of ribosome"/>
    <property type="evidence" value="ECO:0007669"/>
    <property type="project" value="InterPro"/>
</dbReference>
<dbReference type="GO" id="GO:0006412">
    <property type="term" value="P:translation"/>
    <property type="evidence" value="ECO:0007669"/>
    <property type="project" value="UniProtKB-UniRule"/>
</dbReference>
<dbReference type="CDD" id="cd05797">
    <property type="entry name" value="Ribosomal_L10"/>
    <property type="match status" value="1"/>
</dbReference>
<dbReference type="FunFam" id="3.30.70.1730:FF:000001">
    <property type="entry name" value="50S ribosomal protein L10"/>
    <property type="match status" value="1"/>
</dbReference>
<dbReference type="Gene3D" id="3.30.70.1730">
    <property type="match status" value="1"/>
</dbReference>
<dbReference type="Gene3D" id="6.10.250.290">
    <property type="match status" value="1"/>
</dbReference>
<dbReference type="HAMAP" id="MF_00362">
    <property type="entry name" value="Ribosomal_uL10"/>
    <property type="match status" value="1"/>
</dbReference>
<dbReference type="InterPro" id="IPR001790">
    <property type="entry name" value="Ribosomal_uL10"/>
</dbReference>
<dbReference type="InterPro" id="IPR043141">
    <property type="entry name" value="Ribosomal_uL10-like_sf"/>
</dbReference>
<dbReference type="InterPro" id="IPR022973">
    <property type="entry name" value="Ribosomal_uL10_bac"/>
</dbReference>
<dbReference type="InterPro" id="IPR047865">
    <property type="entry name" value="Ribosomal_uL10_bac_type"/>
</dbReference>
<dbReference type="InterPro" id="IPR002363">
    <property type="entry name" value="Ribosomal_uL10_CS_bac"/>
</dbReference>
<dbReference type="NCBIfam" id="NF000955">
    <property type="entry name" value="PRK00099.1-1"/>
    <property type="match status" value="1"/>
</dbReference>
<dbReference type="PANTHER" id="PTHR11560">
    <property type="entry name" value="39S RIBOSOMAL PROTEIN L10, MITOCHONDRIAL"/>
    <property type="match status" value="1"/>
</dbReference>
<dbReference type="Pfam" id="PF00466">
    <property type="entry name" value="Ribosomal_L10"/>
    <property type="match status" value="1"/>
</dbReference>
<dbReference type="SUPFAM" id="SSF160369">
    <property type="entry name" value="Ribosomal protein L10-like"/>
    <property type="match status" value="1"/>
</dbReference>
<dbReference type="PROSITE" id="PS01109">
    <property type="entry name" value="RIBOSOMAL_L10"/>
    <property type="match status" value="1"/>
</dbReference>
<sequence>MSKVIETKQQVVTEIADKLRASKSTIVVDYRGLTVSEATELRKQLREAGVEFKVYKNSLTRRAAESAEMAELNEFLTGPNAIAFSNEDVVAPAKVLNDFAKDHEALEIKAGVIEGKLVTLDEVKAIATLPSREGLLSMLLSVLQAPIRNLALATKAVADQKEEQGA</sequence>
<comment type="function">
    <text evidence="1">Forms part of the ribosomal stalk, playing a central role in the interaction of the ribosome with GTP-bound translation factors.</text>
</comment>
<comment type="subunit">
    <text evidence="1">Part of the ribosomal stalk of the 50S ribosomal subunit. The N-terminus interacts with L11 and the large rRNA to form the base of the stalk. The C-terminus forms an elongated spine to which L12 dimers bind in a sequential fashion forming a multimeric L10(L12)X complex.</text>
</comment>
<comment type="similarity">
    <text evidence="1">Belongs to the universal ribosomal protein uL10 family.</text>
</comment>
<gene>
    <name evidence="1" type="primary">rplJ</name>
    <name type="ordered locus">BA_0099</name>
    <name type="ordered locus">GBAA_0099</name>
    <name type="ordered locus">BAS0099</name>
</gene>
<reference key="1">
    <citation type="journal article" date="2003" name="Nature">
        <title>The genome sequence of Bacillus anthracis Ames and comparison to closely related bacteria.</title>
        <authorList>
            <person name="Read T.D."/>
            <person name="Peterson S.N."/>
            <person name="Tourasse N.J."/>
            <person name="Baillie L.W."/>
            <person name="Paulsen I.T."/>
            <person name="Nelson K.E."/>
            <person name="Tettelin H."/>
            <person name="Fouts D.E."/>
            <person name="Eisen J.A."/>
            <person name="Gill S.R."/>
            <person name="Holtzapple E.K."/>
            <person name="Okstad O.A."/>
            <person name="Helgason E."/>
            <person name="Rilstone J."/>
            <person name="Wu M."/>
            <person name="Kolonay J.F."/>
            <person name="Beanan M.J."/>
            <person name="Dodson R.J."/>
            <person name="Brinkac L.M."/>
            <person name="Gwinn M.L."/>
            <person name="DeBoy R.T."/>
            <person name="Madpu R."/>
            <person name="Daugherty S.C."/>
            <person name="Durkin A.S."/>
            <person name="Haft D.H."/>
            <person name="Nelson W.C."/>
            <person name="Peterson J.D."/>
            <person name="Pop M."/>
            <person name="Khouri H.M."/>
            <person name="Radune D."/>
            <person name="Benton J.L."/>
            <person name="Mahamoud Y."/>
            <person name="Jiang L."/>
            <person name="Hance I.R."/>
            <person name="Weidman J.F."/>
            <person name="Berry K.J."/>
            <person name="Plaut R.D."/>
            <person name="Wolf A.M."/>
            <person name="Watkins K.L."/>
            <person name="Nierman W.C."/>
            <person name="Hazen A."/>
            <person name="Cline R.T."/>
            <person name="Redmond C."/>
            <person name="Thwaite J.E."/>
            <person name="White O."/>
            <person name="Salzberg S.L."/>
            <person name="Thomason B."/>
            <person name="Friedlander A.M."/>
            <person name="Koehler T.M."/>
            <person name="Hanna P.C."/>
            <person name="Kolstoe A.-B."/>
            <person name="Fraser C.M."/>
        </authorList>
    </citation>
    <scope>NUCLEOTIDE SEQUENCE [LARGE SCALE GENOMIC DNA]</scope>
    <source>
        <strain>Ames / isolate Porton</strain>
    </source>
</reference>
<reference key="2">
    <citation type="journal article" date="2009" name="J. Bacteriol.">
        <title>The complete genome sequence of Bacillus anthracis Ames 'Ancestor'.</title>
        <authorList>
            <person name="Ravel J."/>
            <person name="Jiang L."/>
            <person name="Stanley S.T."/>
            <person name="Wilson M.R."/>
            <person name="Decker R.S."/>
            <person name="Read T.D."/>
            <person name="Worsham P."/>
            <person name="Keim P.S."/>
            <person name="Salzberg S.L."/>
            <person name="Fraser-Liggett C.M."/>
            <person name="Rasko D.A."/>
        </authorList>
    </citation>
    <scope>NUCLEOTIDE SEQUENCE [LARGE SCALE GENOMIC DNA]</scope>
    <source>
        <strain>Ames ancestor</strain>
    </source>
</reference>
<reference key="3">
    <citation type="submission" date="2004-01" db="EMBL/GenBank/DDBJ databases">
        <title>Complete genome sequence of Bacillus anthracis Sterne.</title>
        <authorList>
            <person name="Brettin T.S."/>
            <person name="Bruce D."/>
            <person name="Challacombe J.F."/>
            <person name="Gilna P."/>
            <person name="Han C."/>
            <person name="Hill K."/>
            <person name="Hitchcock P."/>
            <person name="Jackson P."/>
            <person name="Keim P."/>
            <person name="Longmire J."/>
            <person name="Lucas S."/>
            <person name="Okinaka R."/>
            <person name="Richardson P."/>
            <person name="Rubin E."/>
            <person name="Tice H."/>
        </authorList>
    </citation>
    <scope>NUCLEOTIDE SEQUENCE [LARGE SCALE GENOMIC DNA]</scope>
    <source>
        <strain>Sterne</strain>
    </source>
</reference>
<organism>
    <name type="scientific">Bacillus anthracis</name>
    <dbReference type="NCBI Taxonomy" id="1392"/>
    <lineage>
        <taxon>Bacteria</taxon>
        <taxon>Bacillati</taxon>
        <taxon>Bacillota</taxon>
        <taxon>Bacilli</taxon>
        <taxon>Bacillales</taxon>
        <taxon>Bacillaceae</taxon>
        <taxon>Bacillus</taxon>
        <taxon>Bacillus cereus group</taxon>
    </lineage>
</organism>
<evidence type="ECO:0000255" key="1">
    <source>
        <dbReference type="HAMAP-Rule" id="MF_00362"/>
    </source>
</evidence>
<evidence type="ECO:0000305" key="2"/>
<name>RL10_BACAN</name>
<protein>
    <recommendedName>
        <fullName evidence="1">Large ribosomal subunit protein uL10</fullName>
    </recommendedName>
    <alternativeName>
        <fullName evidence="2">50S ribosomal protein L10</fullName>
    </alternativeName>
</protein>
<proteinExistence type="inferred from homology"/>